<gene>
    <name type="primary">pfaP</name>
</gene>
<reference key="1">
    <citation type="journal article" date="1995" name="Gene">
        <title>Cloning of the pfaP gene of Leptospira borgpetersenii.</title>
        <authorList>
            <person name="Trueba G.A."/>
            <person name="Bolin C.A."/>
            <person name="Zuerner R.L."/>
        </authorList>
    </citation>
    <scope>NUCLEOTIDE SEQUENCE [GENOMIC DNA]</scope>
    <source>
        <strain>RZ33 / Serovar Hardjobovis</strain>
    </source>
</reference>
<comment type="function">
    <text>Possible protease. May be involved in export of periplasmic flagella proteins.</text>
</comment>
<comment type="similarity">
    <text evidence="3">Belongs to the peptidase S49 family.</text>
</comment>
<dbReference type="EC" id="3.4.21.-"/>
<dbReference type="EMBL" id="L27482">
    <property type="protein sequence ID" value="AAA79884.1"/>
    <property type="molecule type" value="Genomic_DNA"/>
</dbReference>
<dbReference type="SMR" id="Q48513"/>
<dbReference type="GO" id="GO:0008236">
    <property type="term" value="F:serine-type peptidase activity"/>
    <property type="evidence" value="ECO:0007669"/>
    <property type="project" value="UniProtKB-KW"/>
</dbReference>
<dbReference type="GO" id="GO:0006508">
    <property type="term" value="P:proteolysis"/>
    <property type="evidence" value="ECO:0007669"/>
    <property type="project" value="UniProtKB-KW"/>
</dbReference>
<dbReference type="CDD" id="cd07023">
    <property type="entry name" value="S49_Sppa_N_C"/>
    <property type="match status" value="1"/>
</dbReference>
<dbReference type="Gene3D" id="6.20.330.10">
    <property type="match status" value="1"/>
</dbReference>
<dbReference type="Gene3D" id="3.90.226.10">
    <property type="entry name" value="2-enoyl-CoA Hydratase, Chain A, domain 1"/>
    <property type="match status" value="2"/>
</dbReference>
<dbReference type="InterPro" id="IPR029045">
    <property type="entry name" value="ClpP/crotonase-like_dom_sf"/>
</dbReference>
<dbReference type="InterPro" id="IPR004635">
    <property type="entry name" value="Pept_S49_SppA"/>
</dbReference>
<dbReference type="InterPro" id="IPR002142">
    <property type="entry name" value="Peptidase_S49"/>
</dbReference>
<dbReference type="InterPro" id="IPR047272">
    <property type="entry name" value="S49_SppA_C"/>
</dbReference>
<dbReference type="NCBIfam" id="TIGR00706">
    <property type="entry name" value="SppA_dom"/>
    <property type="match status" value="1"/>
</dbReference>
<dbReference type="PANTHER" id="PTHR42987">
    <property type="entry name" value="PEPTIDASE S49"/>
    <property type="match status" value="1"/>
</dbReference>
<dbReference type="PANTHER" id="PTHR42987:SF7">
    <property type="entry name" value="SIGNAL PEPTIDE PEPTIDASE SPPA-RELATED"/>
    <property type="match status" value="1"/>
</dbReference>
<dbReference type="Pfam" id="PF01343">
    <property type="entry name" value="Peptidase_S49"/>
    <property type="match status" value="1"/>
</dbReference>
<dbReference type="SUPFAM" id="SSF52096">
    <property type="entry name" value="ClpP/crotonase"/>
    <property type="match status" value="1"/>
</dbReference>
<evidence type="ECO:0000250" key="1"/>
<evidence type="ECO:0000255" key="2"/>
<evidence type="ECO:0000305" key="3"/>
<organism>
    <name type="scientific">Leptospira borgpetersenii</name>
    <dbReference type="NCBI Taxonomy" id="174"/>
    <lineage>
        <taxon>Bacteria</taxon>
        <taxon>Pseudomonadati</taxon>
        <taxon>Spirochaetota</taxon>
        <taxon>Spirochaetia</taxon>
        <taxon>Leptospirales</taxon>
        <taxon>Leptospiraceae</taxon>
        <taxon>Leptospira</taxon>
    </lineage>
</organism>
<sequence length="204" mass="23354">MRLRKTRKIVVSMKDMAASGGYYIASSADKIFALSGTITGSIGVLQWLRYQRAFGSLGVKMRTYKEGKYKDSLSLFRDSTPEEDEMIQKMLSDTYNEFVQDVAKGRNQTVKSVQNLAEGRIYSGQDAFRNKLVDEIGGRKEALEELSRLCQYDGEIPLYEEEESPFDRLFMMLGSKMNSFSSERIFFREFKNSPVLVILPQAIR</sequence>
<protein>
    <recommendedName>
        <fullName>Putative peptidase PfaP</fullName>
        <ecNumber>3.4.21.-</ecNumber>
    </recommendedName>
    <alternativeName>
        <fullName>PF-associated peptidase</fullName>
    </alternativeName>
    <alternativeName>
        <fullName>Periplasmic flagella-associated protein</fullName>
    </alternativeName>
</protein>
<feature type="signal peptide" evidence="2">
    <location>
        <begin position="1"/>
        <end position="27"/>
    </location>
</feature>
<feature type="chain" id="PRO_0000027357" description="Putative peptidase PfaP">
    <location>
        <begin position="28"/>
        <end position="204"/>
    </location>
</feature>
<feature type="active site" description="Nucleophile" evidence="1">
    <location>
        <position position="19"/>
    </location>
</feature>
<feature type="active site" description="Proton donor/acceptor" evidence="1">
    <location>
        <position position="70"/>
    </location>
</feature>
<keyword id="KW-0378">Hydrolase</keyword>
<keyword id="KW-0645">Protease</keyword>
<keyword id="KW-0720">Serine protease</keyword>
<keyword id="KW-0732">Signal</keyword>
<accession>Q48513</accession>
<proteinExistence type="inferred from homology"/>
<name>PFAP_LEPBO</name>